<feature type="chain" id="PRO_1000065073" description="Ornithine carbamoyltransferase">
    <location>
        <begin position="1"/>
        <end position="306"/>
    </location>
</feature>
<feature type="binding site" evidence="2">
    <location>
        <begin position="51"/>
        <end position="54"/>
    </location>
    <ligand>
        <name>carbamoyl phosphate</name>
        <dbReference type="ChEBI" id="CHEBI:58228"/>
    </ligand>
</feature>
<feature type="binding site" evidence="2">
    <location>
        <position position="78"/>
    </location>
    <ligand>
        <name>carbamoyl phosphate</name>
        <dbReference type="ChEBI" id="CHEBI:58228"/>
    </ligand>
</feature>
<feature type="binding site" evidence="2">
    <location>
        <position position="102"/>
    </location>
    <ligand>
        <name>carbamoyl phosphate</name>
        <dbReference type="ChEBI" id="CHEBI:58228"/>
    </ligand>
</feature>
<feature type="binding site" evidence="2">
    <location>
        <begin position="129"/>
        <end position="132"/>
    </location>
    <ligand>
        <name>carbamoyl phosphate</name>
        <dbReference type="ChEBI" id="CHEBI:58228"/>
    </ligand>
</feature>
<feature type="binding site" evidence="2">
    <location>
        <position position="160"/>
    </location>
    <ligand>
        <name>L-ornithine</name>
        <dbReference type="ChEBI" id="CHEBI:46911"/>
    </ligand>
</feature>
<feature type="binding site" evidence="2">
    <location>
        <position position="223"/>
    </location>
    <ligand>
        <name>L-ornithine</name>
        <dbReference type="ChEBI" id="CHEBI:46911"/>
    </ligand>
</feature>
<feature type="binding site" evidence="2">
    <location>
        <begin position="227"/>
        <end position="228"/>
    </location>
    <ligand>
        <name>L-ornithine</name>
        <dbReference type="ChEBI" id="CHEBI:46911"/>
    </ligand>
</feature>
<feature type="binding site" evidence="2">
    <location>
        <begin position="263"/>
        <end position="264"/>
    </location>
    <ligand>
        <name>carbamoyl phosphate</name>
        <dbReference type="ChEBI" id="CHEBI:58228"/>
    </ligand>
</feature>
<feature type="binding site" evidence="2">
    <location>
        <position position="291"/>
    </location>
    <ligand>
        <name>carbamoyl phosphate</name>
        <dbReference type="ChEBI" id="CHEBI:58228"/>
    </ligand>
</feature>
<organism>
    <name type="scientific">Trichormus variabilis (strain ATCC 29413 / PCC 7937)</name>
    <name type="common">Anabaena variabilis</name>
    <dbReference type="NCBI Taxonomy" id="240292"/>
    <lineage>
        <taxon>Bacteria</taxon>
        <taxon>Bacillati</taxon>
        <taxon>Cyanobacteriota</taxon>
        <taxon>Cyanophyceae</taxon>
        <taxon>Nostocales</taxon>
        <taxon>Nostocaceae</taxon>
        <taxon>Trichormus</taxon>
    </lineage>
</organism>
<protein>
    <recommendedName>
        <fullName evidence="2">Ornithine carbamoyltransferase</fullName>
        <shortName evidence="2">OTCase</shortName>
        <ecNumber evidence="2">2.1.3.3</ecNumber>
    </recommendedName>
</protein>
<gene>
    <name evidence="2" type="primary">argF</name>
    <name type="ordered locus">Ava_2197</name>
</gene>
<name>OTC_TRIV2</name>
<sequence>MAALLGRDLLSLADLTPTELQELLQLATQLKSQQLKLRCNKVLGLLFSKASTRTRVSFTVAMYQLGGQVIDLNPNVTQVSRGEPVQDTARVLERYLDVLAIRTFEQQELATFAEYAKIPVINALTDLEHPCQILADLLTAQECFDTISGLTLTYVGDGNNVANSLMLGCALAGMNVRIATPSGYEPNPQVVAQAQAIADGKTEILLTNDPELATKGASVLYTDVWASMGQEAEANDRFPIFQPYQISEKLLSLAEPNAIVLHCLPAHRGEEITEEVIEGSQSRVWQQAENRLHVQKALLASILGAE</sequence>
<keyword id="KW-0028">Amino-acid biosynthesis</keyword>
<keyword id="KW-0055">Arginine biosynthesis</keyword>
<keyword id="KW-0963">Cytoplasm</keyword>
<keyword id="KW-0808">Transferase</keyword>
<evidence type="ECO:0000250" key="1"/>
<evidence type="ECO:0000255" key="2">
    <source>
        <dbReference type="HAMAP-Rule" id="MF_01109"/>
    </source>
</evidence>
<reference key="1">
    <citation type="journal article" date="2014" name="Stand. Genomic Sci.">
        <title>Complete genome sequence of Anabaena variabilis ATCC 29413.</title>
        <authorList>
            <person name="Thiel T."/>
            <person name="Pratte B.S."/>
            <person name="Zhong J."/>
            <person name="Goodwin L."/>
            <person name="Copeland A."/>
            <person name="Lucas S."/>
            <person name="Han C."/>
            <person name="Pitluck S."/>
            <person name="Land M.L."/>
            <person name="Kyrpides N.C."/>
            <person name="Woyke T."/>
        </authorList>
    </citation>
    <scope>NUCLEOTIDE SEQUENCE [LARGE SCALE GENOMIC DNA]</scope>
    <source>
        <strain>ATCC 29413 / PCC 7937</strain>
    </source>
</reference>
<proteinExistence type="inferred from homology"/>
<accession>Q3MB19</accession>
<comment type="function">
    <text evidence="1">Reversibly catalyzes the transfer of the carbamoyl group from carbamoyl phosphate (CP) to the N(epsilon) atom of ornithine (ORN) to produce L-citrulline.</text>
</comment>
<comment type="catalytic activity">
    <reaction evidence="2">
        <text>carbamoyl phosphate + L-ornithine = L-citrulline + phosphate + H(+)</text>
        <dbReference type="Rhea" id="RHEA:19513"/>
        <dbReference type="ChEBI" id="CHEBI:15378"/>
        <dbReference type="ChEBI" id="CHEBI:43474"/>
        <dbReference type="ChEBI" id="CHEBI:46911"/>
        <dbReference type="ChEBI" id="CHEBI:57743"/>
        <dbReference type="ChEBI" id="CHEBI:58228"/>
        <dbReference type="EC" id="2.1.3.3"/>
    </reaction>
</comment>
<comment type="pathway">
    <text evidence="2">Amino-acid biosynthesis; L-arginine biosynthesis; L-arginine from L-ornithine and carbamoyl phosphate: step 1/3.</text>
</comment>
<comment type="subcellular location">
    <subcellularLocation>
        <location evidence="2">Cytoplasm</location>
    </subcellularLocation>
</comment>
<comment type="similarity">
    <text evidence="2">Belongs to the aspartate/ornithine carbamoyltransferase superfamily. OTCase family.</text>
</comment>
<dbReference type="EC" id="2.1.3.3" evidence="2"/>
<dbReference type="EMBL" id="CP000117">
    <property type="protein sequence ID" value="ABA21817.1"/>
    <property type="molecule type" value="Genomic_DNA"/>
</dbReference>
<dbReference type="SMR" id="Q3MB19"/>
<dbReference type="STRING" id="240292.Ava_2197"/>
<dbReference type="KEGG" id="ava:Ava_2197"/>
<dbReference type="eggNOG" id="COG0078">
    <property type="taxonomic scope" value="Bacteria"/>
</dbReference>
<dbReference type="HOGENOM" id="CLU_043846_3_2_3"/>
<dbReference type="UniPathway" id="UPA00068">
    <property type="reaction ID" value="UER00112"/>
</dbReference>
<dbReference type="Proteomes" id="UP000002533">
    <property type="component" value="Chromosome"/>
</dbReference>
<dbReference type="GO" id="GO:0005737">
    <property type="term" value="C:cytoplasm"/>
    <property type="evidence" value="ECO:0007669"/>
    <property type="project" value="UniProtKB-SubCell"/>
</dbReference>
<dbReference type="GO" id="GO:0016597">
    <property type="term" value="F:amino acid binding"/>
    <property type="evidence" value="ECO:0007669"/>
    <property type="project" value="InterPro"/>
</dbReference>
<dbReference type="GO" id="GO:0004585">
    <property type="term" value="F:ornithine carbamoyltransferase activity"/>
    <property type="evidence" value="ECO:0007669"/>
    <property type="project" value="UniProtKB-UniRule"/>
</dbReference>
<dbReference type="GO" id="GO:0042450">
    <property type="term" value="P:arginine biosynthetic process via ornithine"/>
    <property type="evidence" value="ECO:0007669"/>
    <property type="project" value="TreeGrafter"/>
</dbReference>
<dbReference type="GO" id="GO:0019240">
    <property type="term" value="P:citrulline biosynthetic process"/>
    <property type="evidence" value="ECO:0007669"/>
    <property type="project" value="TreeGrafter"/>
</dbReference>
<dbReference type="GO" id="GO:0006526">
    <property type="term" value="P:L-arginine biosynthetic process"/>
    <property type="evidence" value="ECO:0007669"/>
    <property type="project" value="UniProtKB-UniRule"/>
</dbReference>
<dbReference type="FunFam" id="3.40.50.1370:FF:000008">
    <property type="entry name" value="Ornithine carbamoyltransferase"/>
    <property type="match status" value="1"/>
</dbReference>
<dbReference type="Gene3D" id="3.40.50.1370">
    <property type="entry name" value="Aspartate/ornithine carbamoyltransferase"/>
    <property type="match status" value="2"/>
</dbReference>
<dbReference type="HAMAP" id="MF_01109">
    <property type="entry name" value="OTCase"/>
    <property type="match status" value="1"/>
</dbReference>
<dbReference type="InterPro" id="IPR006132">
    <property type="entry name" value="Asp/Orn_carbamoyltranf_P-bd"/>
</dbReference>
<dbReference type="InterPro" id="IPR006130">
    <property type="entry name" value="Asp/Orn_carbamoylTrfase"/>
</dbReference>
<dbReference type="InterPro" id="IPR036901">
    <property type="entry name" value="Asp/Orn_carbamoylTrfase_sf"/>
</dbReference>
<dbReference type="InterPro" id="IPR006131">
    <property type="entry name" value="Asp_carbamoyltransf_Asp/Orn-bd"/>
</dbReference>
<dbReference type="InterPro" id="IPR002292">
    <property type="entry name" value="Orn/put_carbamltrans"/>
</dbReference>
<dbReference type="InterPro" id="IPR024904">
    <property type="entry name" value="OTCase_ArgI"/>
</dbReference>
<dbReference type="NCBIfam" id="TIGR00658">
    <property type="entry name" value="orni_carb_tr"/>
    <property type="match status" value="1"/>
</dbReference>
<dbReference type="NCBIfam" id="NF001986">
    <property type="entry name" value="PRK00779.1"/>
    <property type="match status" value="1"/>
</dbReference>
<dbReference type="PANTHER" id="PTHR45753">
    <property type="entry name" value="ORNITHINE CARBAMOYLTRANSFERASE, MITOCHONDRIAL"/>
    <property type="match status" value="1"/>
</dbReference>
<dbReference type="PANTHER" id="PTHR45753:SF3">
    <property type="entry name" value="ORNITHINE TRANSCARBAMYLASE, MITOCHONDRIAL"/>
    <property type="match status" value="1"/>
</dbReference>
<dbReference type="Pfam" id="PF00185">
    <property type="entry name" value="OTCace"/>
    <property type="match status" value="1"/>
</dbReference>
<dbReference type="Pfam" id="PF02729">
    <property type="entry name" value="OTCace_N"/>
    <property type="match status" value="1"/>
</dbReference>
<dbReference type="PRINTS" id="PR00100">
    <property type="entry name" value="AOTCASE"/>
</dbReference>
<dbReference type="PRINTS" id="PR00102">
    <property type="entry name" value="OTCASE"/>
</dbReference>
<dbReference type="SUPFAM" id="SSF53671">
    <property type="entry name" value="Aspartate/ornithine carbamoyltransferase"/>
    <property type="match status" value="1"/>
</dbReference>
<dbReference type="PROSITE" id="PS00097">
    <property type="entry name" value="CARBAMOYLTRANSFERASE"/>
    <property type="match status" value="1"/>
</dbReference>